<comment type="function">
    <text evidence="2 3">4-dimethylallyltryptophan N-methyltransferase; part of the gene cluster that mediates the biosynthesis of fungal ergot alkaloid (PubMed:17720822). DmaW catalyzes the first step of ergot alkaloid biosynthesis by condensing dimethylallyl diphosphate (DMAP) and tryptophan to form 4-dimethylallyl-L-tryptophan (By similarity). The second step is catalyzed by the methyltransferase easF that methylates 4-dimethylallyl-L-tryptophan in the presence of S-adenosyl-L-methionine, resulting in the formation of 4-dimethylallyl-L-abrine (By similarity). The catalase easC and the FAD-dependent oxidoreductase easE then transform 4-dimethylallyl-L-abrine to chanoclavine-I which is further oxidized by easD in the presence of NAD(+), resulting in the formation of chanoclavine-I aldehyde (By similarity). Agroclavine dehydrogenase easG then mediates the conversion of chanoclavine-I aldehyde to agroclavine via a non-enzymatic adduct reaction: the substrate is an iminium intermediate that is formed spontaneously from chanoclavine-I aldehyde in the presence of glutathione (By similarity). Further conversion of agroclavine to paspalic acid is a two-step process involving oxidation of agroclavine to elymoclavine and of elymoclavine to paspalic acid, the second step being performed by the elymoclavine oxidase cloA (PubMed:17720822). However, cloA does not encode a functional enzyme indicating that C.fusiformis terminates its ergot alkaloid pathway at elymoclavine (PubMed:17720822).</text>
</comment>
<comment type="catalytic activity">
    <reaction evidence="1">
        <text>4-(3-methylbut-2-enyl)-L-tryptophan + S-adenosyl-L-methionine = 4-(3-methylbut-2-enyl)-L-abrine + S-adenosyl-L-homocysteine + H(+)</text>
        <dbReference type="Rhea" id="RHEA:34435"/>
        <dbReference type="ChEBI" id="CHEBI:15378"/>
        <dbReference type="ChEBI" id="CHEBI:57856"/>
        <dbReference type="ChEBI" id="CHEBI:58209"/>
        <dbReference type="ChEBI" id="CHEBI:59789"/>
        <dbReference type="ChEBI" id="CHEBI:67248"/>
        <dbReference type="EC" id="2.1.1.261"/>
    </reaction>
</comment>
<comment type="pathway">
    <text evidence="6">Alkaloid biosynthesis; ergot alkaloid biosynthesis.</text>
</comment>
<comment type="subunit">
    <text evidence="1">Homodimer.</text>
</comment>
<comment type="similarity">
    <text evidence="5">Belongs to the methyltransferase superfamily.</text>
</comment>
<feature type="chain" id="PRO_0000439141" description="4-dimethylallyltryptophan N-methyltransferase easF">
    <location>
        <begin position="1"/>
        <end position="355"/>
    </location>
</feature>
<evidence type="ECO:0000250" key="1">
    <source>
        <dbReference type="UniProtKB" id="B6D5I7"/>
    </source>
</evidence>
<evidence type="ECO:0000250" key="2">
    <source>
        <dbReference type="UniProtKB" id="Q5G5T6"/>
    </source>
</evidence>
<evidence type="ECO:0000269" key="3">
    <source>
    </source>
</evidence>
<evidence type="ECO:0000303" key="4">
    <source>
    </source>
</evidence>
<evidence type="ECO:0000305" key="5"/>
<evidence type="ECO:0000305" key="6">
    <source>
    </source>
</evidence>
<gene>
    <name evidence="4" type="primary">easF</name>
</gene>
<protein>
    <recommendedName>
        <fullName evidence="1">4-dimethylallyltryptophan N-methyltransferase easF</fullName>
        <ecNumber evidence="1">2.1.1.261</ecNumber>
    </recommendedName>
    <alternativeName>
        <fullName evidence="1">4-dimethylallyltryptophan methyltransferase</fullName>
    </alternativeName>
    <alternativeName>
        <fullName evidence="4">Ergot alkaloid synthesis protein F</fullName>
    </alternativeName>
</protein>
<organism>
    <name type="scientific">Claviceps fusiformis</name>
    <name type="common">Ergot fungus</name>
    <dbReference type="NCBI Taxonomy" id="40602"/>
    <lineage>
        <taxon>Eukaryota</taxon>
        <taxon>Fungi</taxon>
        <taxon>Dikarya</taxon>
        <taxon>Ascomycota</taxon>
        <taxon>Pezizomycotina</taxon>
        <taxon>Sordariomycetes</taxon>
        <taxon>Hypocreomycetidae</taxon>
        <taxon>Hypocreales</taxon>
        <taxon>Clavicipitaceae</taxon>
        <taxon>Claviceps</taxon>
    </lineage>
</organism>
<reference key="1">
    <citation type="journal article" date="2007" name="Appl. Environ. Microbiol.">
        <title>Comparison of ergot alkaloid biosynthesis gene clusters in Claviceps species indicates loss of late pathway steps in evolution of C. fusiformis.</title>
        <authorList>
            <person name="Lorenz N."/>
            <person name="Wilson E.V."/>
            <person name="Machado C."/>
            <person name="Schardl C.L."/>
            <person name="Tudzynski P."/>
        </authorList>
    </citation>
    <scope>NUCLEOTIDE SEQUENCE [GENOMIC DNA]</scope>
    <scope>FUNCTION</scope>
    <source>
        <strain>ATCC 26245 / DSM 2942 / CBS 164.59</strain>
    </source>
</reference>
<accession>A8C7S0</accession>
<name>EASF_CLAFS</name>
<dbReference type="EC" id="2.1.1.261" evidence="1"/>
<dbReference type="EMBL" id="EU006773">
    <property type="protein sequence ID" value="ABV57824.1"/>
    <property type="molecule type" value="Genomic_DNA"/>
</dbReference>
<dbReference type="SMR" id="A8C7S0"/>
<dbReference type="UniPathway" id="UPA00327"/>
<dbReference type="GO" id="GO:0008168">
    <property type="term" value="F:methyltransferase activity"/>
    <property type="evidence" value="ECO:0007669"/>
    <property type="project" value="UniProtKB-KW"/>
</dbReference>
<dbReference type="GO" id="GO:0035835">
    <property type="term" value="P:indole alkaloid biosynthetic process"/>
    <property type="evidence" value="ECO:0007669"/>
    <property type="project" value="UniProtKB-UniPathway"/>
</dbReference>
<dbReference type="GO" id="GO:0032259">
    <property type="term" value="P:methylation"/>
    <property type="evidence" value="ECO:0007669"/>
    <property type="project" value="UniProtKB-KW"/>
</dbReference>
<dbReference type="Gene3D" id="3.40.50.150">
    <property type="entry name" value="Vaccinia Virus protein VP39"/>
    <property type="match status" value="1"/>
</dbReference>
<dbReference type="InterPro" id="IPR051128">
    <property type="entry name" value="EgtD_Methyltrsf_superfamily"/>
</dbReference>
<dbReference type="InterPro" id="IPR019257">
    <property type="entry name" value="MeTrfase_dom"/>
</dbReference>
<dbReference type="InterPro" id="IPR017804">
    <property type="entry name" value="MeTrfase_EgtD-like"/>
</dbReference>
<dbReference type="InterPro" id="IPR029063">
    <property type="entry name" value="SAM-dependent_MTases_sf"/>
</dbReference>
<dbReference type="InterPro" id="IPR017805">
    <property type="entry name" value="SAM_MeTrfase_EasF-type_put"/>
</dbReference>
<dbReference type="NCBIfam" id="TIGR03439">
    <property type="entry name" value="methyl_EasF"/>
    <property type="match status" value="1"/>
</dbReference>
<dbReference type="PANTHER" id="PTHR43397">
    <property type="entry name" value="ERGOTHIONEINE BIOSYNTHESIS PROTEIN 1"/>
    <property type="match status" value="1"/>
</dbReference>
<dbReference type="PANTHER" id="PTHR43397:SF1">
    <property type="entry name" value="ERGOTHIONEINE BIOSYNTHESIS PROTEIN 1"/>
    <property type="match status" value="1"/>
</dbReference>
<dbReference type="Pfam" id="PF10017">
    <property type="entry name" value="Methyltransf_33"/>
    <property type="match status" value="1"/>
</dbReference>
<dbReference type="PIRSF" id="PIRSF018005">
    <property type="entry name" value="UCP018005"/>
    <property type="match status" value="1"/>
</dbReference>
<sequence>MPACSVTDIRSHVVEDSLPDQVIKGLKSSPKTLPALLFYSNEGLDHWNHHVSQPDFYPRHQEVDILKQRGDEMARAIAPNSVILDLGSANLEKVVHLLKALEAQGKDVTYFALDISAPQLEVTLNEIPTSEFRHVRFAGLHGTFEDGLRWISETPHICDLPHCVLLLGLTIGNFSRASAATFLGNIASQALRGASKDQSSILMSLDSCKVPTQILRAYTSNGVEPFALQSLTFAKTLLRGPMLHNDSDEPLPCYLQPDDWYYHSEWNFVLGRHEASLIPRYRDVHLGSLLQDITVKKDEKIRFGCSYKYDDMERHQLFLDAGVEQDVAWTNEGCDVVIYELKKRSNTEKLGIDRN</sequence>
<keyword id="KW-0017">Alkaloid metabolism</keyword>
<keyword id="KW-0489">Methyltransferase</keyword>
<keyword id="KW-0949">S-adenosyl-L-methionine</keyword>
<keyword id="KW-0808">Transferase</keyword>
<proteinExistence type="inferred from homology"/>